<gene>
    <name evidence="1" type="primary">ndhJ</name>
</gene>
<proteinExistence type="inferred from homology"/>
<dbReference type="EC" id="7.1.1.-" evidence="1"/>
<dbReference type="EMBL" id="EU262890">
    <property type="protein sequence ID" value="ABX10025.1"/>
    <property type="molecule type" value="Genomic_DNA"/>
</dbReference>
<dbReference type="RefSeq" id="YP_001687271.1">
    <property type="nucleotide sequence ID" value="NC_010360.2"/>
</dbReference>
<dbReference type="SMR" id="B0Z532"/>
<dbReference type="GeneID" id="5955323"/>
<dbReference type="GO" id="GO:0009535">
    <property type="term" value="C:chloroplast thylakoid membrane"/>
    <property type="evidence" value="ECO:0007669"/>
    <property type="project" value="UniProtKB-SubCell"/>
</dbReference>
<dbReference type="GO" id="GO:0008137">
    <property type="term" value="F:NADH dehydrogenase (ubiquinone) activity"/>
    <property type="evidence" value="ECO:0007669"/>
    <property type="project" value="InterPro"/>
</dbReference>
<dbReference type="GO" id="GO:0048038">
    <property type="term" value="F:quinone binding"/>
    <property type="evidence" value="ECO:0007669"/>
    <property type="project" value="UniProtKB-KW"/>
</dbReference>
<dbReference type="GO" id="GO:0019684">
    <property type="term" value="P:photosynthesis, light reaction"/>
    <property type="evidence" value="ECO:0007669"/>
    <property type="project" value="UniProtKB-UniRule"/>
</dbReference>
<dbReference type="FunFam" id="3.30.460.80:FF:000004">
    <property type="entry name" value="NAD(P)H-quinone oxidoreductase subunit J, chloroplastic"/>
    <property type="match status" value="1"/>
</dbReference>
<dbReference type="Gene3D" id="3.30.460.80">
    <property type="entry name" value="NADH:ubiquinone oxidoreductase, 30kDa subunit"/>
    <property type="match status" value="1"/>
</dbReference>
<dbReference type="HAMAP" id="MF_01357">
    <property type="entry name" value="NDH1_NuoC"/>
    <property type="match status" value="1"/>
</dbReference>
<dbReference type="InterPro" id="IPR010218">
    <property type="entry name" value="NADH_DH_suC"/>
</dbReference>
<dbReference type="InterPro" id="IPR037232">
    <property type="entry name" value="NADH_quin_OxRdtase_su_C/D-like"/>
</dbReference>
<dbReference type="InterPro" id="IPR001268">
    <property type="entry name" value="NADH_UbQ_OxRdtase_30kDa_su"/>
</dbReference>
<dbReference type="InterPro" id="IPR020396">
    <property type="entry name" value="NADH_UbQ_OxRdtase_CS"/>
</dbReference>
<dbReference type="NCBIfam" id="NF009141">
    <property type="entry name" value="PRK12494.1"/>
    <property type="match status" value="1"/>
</dbReference>
<dbReference type="PANTHER" id="PTHR10884:SF14">
    <property type="entry name" value="NADH DEHYDROGENASE [UBIQUINONE] IRON-SULFUR PROTEIN 3, MITOCHONDRIAL"/>
    <property type="match status" value="1"/>
</dbReference>
<dbReference type="PANTHER" id="PTHR10884">
    <property type="entry name" value="NADH DEHYDROGENASE UBIQUINONE IRON-SULFUR PROTEIN 3"/>
    <property type="match status" value="1"/>
</dbReference>
<dbReference type="Pfam" id="PF00329">
    <property type="entry name" value="Complex1_30kDa"/>
    <property type="match status" value="1"/>
</dbReference>
<dbReference type="SUPFAM" id="SSF143243">
    <property type="entry name" value="Nqo5-like"/>
    <property type="match status" value="1"/>
</dbReference>
<dbReference type="PROSITE" id="PS00542">
    <property type="entry name" value="COMPLEX1_30K"/>
    <property type="match status" value="1"/>
</dbReference>
<protein>
    <recommendedName>
        <fullName evidence="1">NAD(P)H-quinone oxidoreductase subunit J, chloroplastic</fullName>
        <ecNumber evidence="1">7.1.1.-</ecNumber>
    </recommendedName>
    <alternativeName>
        <fullName>NAD(P)H dehydrogenase subunit J</fullName>
    </alternativeName>
    <alternativeName>
        <fullName evidence="1">NADH-plastoquinone oxidoreductase subunit J</fullName>
    </alternativeName>
</protein>
<name>NDHJ_OENGL</name>
<keyword id="KW-0150">Chloroplast</keyword>
<keyword id="KW-0472">Membrane</keyword>
<keyword id="KW-0520">NAD</keyword>
<keyword id="KW-0521">NADP</keyword>
<keyword id="KW-0934">Plastid</keyword>
<keyword id="KW-0618">Plastoquinone</keyword>
<keyword id="KW-0874">Quinone</keyword>
<keyword id="KW-0793">Thylakoid</keyword>
<keyword id="KW-1278">Translocase</keyword>
<keyword id="KW-0813">Transport</keyword>
<reference key="1">
    <citation type="journal article" date="2008" name="Nucleic Acids Res.">
        <title>The complete nucleotide sequences of the five genetically distinct plastid genomes of Oenothera, subsection Oenothera: I. Sequence evaluation and plastome evolution.</title>
        <authorList>
            <person name="Greiner S."/>
            <person name="Wang X."/>
            <person name="Rauwolf U."/>
            <person name="Silber M.V."/>
            <person name="Mayer K."/>
            <person name="Meurer J."/>
            <person name="Haberer G."/>
            <person name="Herrmann R.G."/>
        </authorList>
    </citation>
    <scope>NUCLEOTIDE SEQUENCE [LARGE SCALE GENOMIC DNA]</scope>
    <source>
        <strain>cv. Rr-lamarckiana Sweden</strain>
    </source>
</reference>
<evidence type="ECO:0000255" key="1">
    <source>
        <dbReference type="HAMAP-Rule" id="MF_01357"/>
    </source>
</evidence>
<comment type="function">
    <text evidence="1">NDH shuttles electrons from NAD(P)H:plastoquinone, via FMN and iron-sulfur (Fe-S) centers, to quinones in the photosynthetic chain and possibly in a chloroplast respiratory chain. The immediate electron acceptor for the enzyme in this species is believed to be plastoquinone. Couples the redox reaction to proton translocation, and thus conserves the redox energy in a proton gradient.</text>
</comment>
<comment type="catalytic activity">
    <reaction evidence="1">
        <text>a plastoquinone + NADH + (n+1) H(+)(in) = a plastoquinol + NAD(+) + n H(+)(out)</text>
        <dbReference type="Rhea" id="RHEA:42608"/>
        <dbReference type="Rhea" id="RHEA-COMP:9561"/>
        <dbReference type="Rhea" id="RHEA-COMP:9562"/>
        <dbReference type="ChEBI" id="CHEBI:15378"/>
        <dbReference type="ChEBI" id="CHEBI:17757"/>
        <dbReference type="ChEBI" id="CHEBI:57540"/>
        <dbReference type="ChEBI" id="CHEBI:57945"/>
        <dbReference type="ChEBI" id="CHEBI:62192"/>
    </reaction>
</comment>
<comment type="catalytic activity">
    <reaction evidence="1">
        <text>a plastoquinone + NADPH + (n+1) H(+)(in) = a plastoquinol + NADP(+) + n H(+)(out)</text>
        <dbReference type="Rhea" id="RHEA:42612"/>
        <dbReference type="Rhea" id="RHEA-COMP:9561"/>
        <dbReference type="Rhea" id="RHEA-COMP:9562"/>
        <dbReference type="ChEBI" id="CHEBI:15378"/>
        <dbReference type="ChEBI" id="CHEBI:17757"/>
        <dbReference type="ChEBI" id="CHEBI:57783"/>
        <dbReference type="ChEBI" id="CHEBI:58349"/>
        <dbReference type="ChEBI" id="CHEBI:62192"/>
    </reaction>
</comment>
<comment type="subunit">
    <text evidence="1">NDH is composed of at least 16 different subunits, 5 of which are encoded in the nucleus.</text>
</comment>
<comment type="subcellular location">
    <subcellularLocation>
        <location evidence="1">Plastid</location>
        <location evidence="1">Chloroplast thylakoid membrane</location>
        <topology evidence="1">Peripheral membrane protein</topology>
        <orientation evidence="1">Stromal side</orientation>
    </subcellularLocation>
</comment>
<comment type="similarity">
    <text evidence="1">Belongs to the complex I 30 kDa subunit family.</text>
</comment>
<feature type="chain" id="PRO_0000358291" description="NAD(P)H-quinone oxidoreductase subunit J, chloroplastic">
    <location>
        <begin position="1"/>
        <end position="158"/>
    </location>
</feature>
<geneLocation type="chloroplast"/>
<organism>
    <name type="scientific">Oenothera glazioviana</name>
    <name type="common">Large-flowered evening primrose</name>
    <name type="synonym">Oenothera erythrosepala</name>
    <dbReference type="NCBI Taxonomy" id="482428"/>
    <lineage>
        <taxon>Eukaryota</taxon>
        <taxon>Viridiplantae</taxon>
        <taxon>Streptophyta</taxon>
        <taxon>Embryophyta</taxon>
        <taxon>Tracheophyta</taxon>
        <taxon>Spermatophyta</taxon>
        <taxon>Magnoliopsida</taxon>
        <taxon>eudicotyledons</taxon>
        <taxon>Gunneridae</taxon>
        <taxon>Pentapetalae</taxon>
        <taxon>rosids</taxon>
        <taxon>malvids</taxon>
        <taxon>Myrtales</taxon>
        <taxon>Onagraceae</taxon>
        <taxon>Onagroideae</taxon>
        <taxon>Onagreae</taxon>
        <taxon>Oenothera</taxon>
    </lineage>
</organism>
<accession>B0Z532</accession>
<sequence>MQGRLSAWLVKHGLVHRSLGFDYQGIETLQIKPEEWHSIAVILYVYGYNYLRSQCAYDVAPGGLLASVYHLTRIEYGVDQAEEVCIKVFAPRNNPRIPSVFWVWKSADFQERESYDMLGIRYDNHPRLKRILMPESWIGWPLRKDYIAPNFYEIQDAH</sequence>